<protein>
    <recommendedName>
        <fullName evidence="1">Bifunctional protein FolD</fullName>
    </recommendedName>
    <domain>
        <recommendedName>
            <fullName evidence="1">Methylenetetrahydrofolate dehydrogenase</fullName>
            <ecNumber evidence="1">1.5.1.5</ecNumber>
        </recommendedName>
    </domain>
    <domain>
        <recommendedName>
            <fullName evidence="1">Methenyltetrahydrofolate cyclohydrolase</fullName>
            <ecNumber evidence="1">3.5.4.9</ecNumber>
        </recommendedName>
    </domain>
</protein>
<sequence>MVAKILDGKQIAKEYRQRLKNQVNDLKEYGFTPKLSVILVGNDGASQSYVKSKKKAAEKIGMISEIIHLDESTSEEVVLSELNRLNNDDTVSGILVQVPLPKQVSEQKVLEAINPEKDVDGFHPINIGKLYIDEQTFVPCTPLGIMEILKHADINLEGKNAVVIGRSHIVGQPVSKLLLQANATVTILHSRTKNMNAHLKQADVIVSAVGQPGLVTKENVKKGAVIIDVGNTPDENGKLKGDVAYDEIKEIASAITPVPGGVGPLTITMVLNNTLLAEKLRRGLTK</sequence>
<reference key="1">
    <citation type="journal article" date="2005" name="J. Bacteriol.">
        <title>Insights on evolution of virulence and resistance from the complete genome analysis of an early methicillin-resistant Staphylococcus aureus strain and a biofilm-producing methicillin-resistant Staphylococcus epidermidis strain.</title>
        <authorList>
            <person name="Gill S.R."/>
            <person name="Fouts D.E."/>
            <person name="Archer G.L."/>
            <person name="Mongodin E.F."/>
            <person name="DeBoy R.T."/>
            <person name="Ravel J."/>
            <person name="Paulsen I.T."/>
            <person name="Kolonay J.F."/>
            <person name="Brinkac L.M."/>
            <person name="Beanan M.J."/>
            <person name="Dodson R.J."/>
            <person name="Daugherty S.C."/>
            <person name="Madupu R."/>
            <person name="Angiuoli S.V."/>
            <person name="Durkin A.S."/>
            <person name="Haft D.H."/>
            <person name="Vamathevan J.J."/>
            <person name="Khouri H."/>
            <person name="Utterback T.R."/>
            <person name="Lee C."/>
            <person name="Dimitrov G."/>
            <person name="Jiang L."/>
            <person name="Qin H."/>
            <person name="Weidman J."/>
            <person name="Tran K."/>
            <person name="Kang K.H."/>
            <person name="Hance I.R."/>
            <person name="Nelson K.E."/>
            <person name="Fraser C.M."/>
        </authorList>
    </citation>
    <scope>NUCLEOTIDE SEQUENCE [LARGE SCALE GENOMIC DNA]</scope>
    <source>
        <strain>ATCC 35984 / DSM 28319 / BCRC 17069 / CCUG 31568 / BM 3577 / RP62A</strain>
    </source>
</reference>
<accession>Q5HQA7</accession>
<name>FOLD_STAEQ</name>
<feature type="chain" id="PRO_0000265951" description="Bifunctional protein FolD">
    <location>
        <begin position="1"/>
        <end position="286"/>
    </location>
</feature>
<feature type="binding site" evidence="1">
    <location>
        <begin position="165"/>
        <end position="167"/>
    </location>
    <ligand>
        <name>NADP(+)</name>
        <dbReference type="ChEBI" id="CHEBI:58349"/>
    </ligand>
</feature>
<feature type="binding site" evidence="1">
    <location>
        <position position="190"/>
    </location>
    <ligand>
        <name>NADP(+)</name>
        <dbReference type="ChEBI" id="CHEBI:58349"/>
    </ligand>
</feature>
<keyword id="KW-0028">Amino-acid biosynthesis</keyword>
<keyword id="KW-0368">Histidine biosynthesis</keyword>
<keyword id="KW-0378">Hydrolase</keyword>
<keyword id="KW-0486">Methionine biosynthesis</keyword>
<keyword id="KW-0511">Multifunctional enzyme</keyword>
<keyword id="KW-0521">NADP</keyword>
<keyword id="KW-0554">One-carbon metabolism</keyword>
<keyword id="KW-0560">Oxidoreductase</keyword>
<keyword id="KW-0658">Purine biosynthesis</keyword>
<keyword id="KW-1185">Reference proteome</keyword>
<proteinExistence type="inferred from homology"/>
<organism>
    <name type="scientific">Staphylococcus epidermidis (strain ATCC 35984 / DSM 28319 / BCRC 17069 / CCUG 31568 / BM 3577 / RP62A)</name>
    <dbReference type="NCBI Taxonomy" id="176279"/>
    <lineage>
        <taxon>Bacteria</taxon>
        <taxon>Bacillati</taxon>
        <taxon>Bacillota</taxon>
        <taxon>Bacilli</taxon>
        <taxon>Bacillales</taxon>
        <taxon>Staphylococcaceae</taxon>
        <taxon>Staphylococcus</taxon>
    </lineage>
</organism>
<comment type="function">
    <text evidence="1">Catalyzes the oxidation of 5,10-methylenetetrahydrofolate to 5,10-methenyltetrahydrofolate and then the hydrolysis of 5,10-methenyltetrahydrofolate to 10-formyltetrahydrofolate.</text>
</comment>
<comment type="catalytic activity">
    <reaction evidence="1">
        <text>(6R)-5,10-methylene-5,6,7,8-tetrahydrofolate + NADP(+) = (6R)-5,10-methenyltetrahydrofolate + NADPH</text>
        <dbReference type="Rhea" id="RHEA:22812"/>
        <dbReference type="ChEBI" id="CHEBI:15636"/>
        <dbReference type="ChEBI" id="CHEBI:57455"/>
        <dbReference type="ChEBI" id="CHEBI:57783"/>
        <dbReference type="ChEBI" id="CHEBI:58349"/>
        <dbReference type="EC" id="1.5.1.5"/>
    </reaction>
</comment>
<comment type="catalytic activity">
    <reaction evidence="1">
        <text>(6R)-5,10-methenyltetrahydrofolate + H2O = (6R)-10-formyltetrahydrofolate + H(+)</text>
        <dbReference type="Rhea" id="RHEA:23700"/>
        <dbReference type="ChEBI" id="CHEBI:15377"/>
        <dbReference type="ChEBI" id="CHEBI:15378"/>
        <dbReference type="ChEBI" id="CHEBI:57455"/>
        <dbReference type="ChEBI" id="CHEBI:195366"/>
        <dbReference type="EC" id="3.5.4.9"/>
    </reaction>
</comment>
<comment type="pathway">
    <text evidence="1">One-carbon metabolism; tetrahydrofolate interconversion.</text>
</comment>
<comment type="subunit">
    <text evidence="1">Homodimer.</text>
</comment>
<comment type="similarity">
    <text evidence="1">Belongs to the tetrahydrofolate dehydrogenase/cyclohydrolase family.</text>
</comment>
<evidence type="ECO:0000255" key="1">
    <source>
        <dbReference type="HAMAP-Rule" id="MF_01576"/>
    </source>
</evidence>
<gene>
    <name evidence="1" type="primary">folD</name>
    <name type="ordered locus">SERP0648</name>
</gene>
<dbReference type="EC" id="1.5.1.5" evidence="1"/>
<dbReference type="EC" id="3.5.4.9" evidence="1"/>
<dbReference type="EMBL" id="CP000029">
    <property type="protein sequence ID" value="AAW53986.1"/>
    <property type="molecule type" value="Genomic_DNA"/>
</dbReference>
<dbReference type="RefSeq" id="WP_002486054.1">
    <property type="nucleotide sequence ID" value="NC_002976.3"/>
</dbReference>
<dbReference type="SMR" id="Q5HQA7"/>
<dbReference type="STRING" id="176279.SERP0648"/>
<dbReference type="GeneID" id="50019099"/>
<dbReference type="KEGG" id="ser:SERP0648"/>
<dbReference type="eggNOG" id="COG0190">
    <property type="taxonomic scope" value="Bacteria"/>
</dbReference>
<dbReference type="HOGENOM" id="CLU_034045_2_1_9"/>
<dbReference type="UniPathway" id="UPA00193"/>
<dbReference type="Proteomes" id="UP000000531">
    <property type="component" value="Chromosome"/>
</dbReference>
<dbReference type="GO" id="GO:0005829">
    <property type="term" value="C:cytosol"/>
    <property type="evidence" value="ECO:0007669"/>
    <property type="project" value="TreeGrafter"/>
</dbReference>
<dbReference type="GO" id="GO:0004477">
    <property type="term" value="F:methenyltetrahydrofolate cyclohydrolase activity"/>
    <property type="evidence" value="ECO:0007669"/>
    <property type="project" value="UniProtKB-UniRule"/>
</dbReference>
<dbReference type="GO" id="GO:0004488">
    <property type="term" value="F:methylenetetrahydrofolate dehydrogenase (NADP+) activity"/>
    <property type="evidence" value="ECO:0007669"/>
    <property type="project" value="UniProtKB-UniRule"/>
</dbReference>
<dbReference type="GO" id="GO:0000105">
    <property type="term" value="P:L-histidine biosynthetic process"/>
    <property type="evidence" value="ECO:0007669"/>
    <property type="project" value="UniProtKB-KW"/>
</dbReference>
<dbReference type="GO" id="GO:0009086">
    <property type="term" value="P:methionine biosynthetic process"/>
    <property type="evidence" value="ECO:0007669"/>
    <property type="project" value="UniProtKB-KW"/>
</dbReference>
<dbReference type="GO" id="GO:0006164">
    <property type="term" value="P:purine nucleotide biosynthetic process"/>
    <property type="evidence" value="ECO:0007669"/>
    <property type="project" value="UniProtKB-KW"/>
</dbReference>
<dbReference type="GO" id="GO:0035999">
    <property type="term" value="P:tetrahydrofolate interconversion"/>
    <property type="evidence" value="ECO:0007669"/>
    <property type="project" value="UniProtKB-UniRule"/>
</dbReference>
<dbReference type="CDD" id="cd01080">
    <property type="entry name" value="NAD_bind_m-THF_DH_Cyclohyd"/>
    <property type="match status" value="1"/>
</dbReference>
<dbReference type="FunFam" id="3.40.50.720:FF:000094">
    <property type="entry name" value="Bifunctional protein FolD"/>
    <property type="match status" value="1"/>
</dbReference>
<dbReference type="FunFam" id="3.40.50.10860:FF:000005">
    <property type="entry name" value="C-1-tetrahydrofolate synthase, cytoplasmic, putative"/>
    <property type="match status" value="1"/>
</dbReference>
<dbReference type="Gene3D" id="3.40.50.10860">
    <property type="entry name" value="Leucine Dehydrogenase, chain A, domain 1"/>
    <property type="match status" value="1"/>
</dbReference>
<dbReference type="Gene3D" id="3.40.50.720">
    <property type="entry name" value="NAD(P)-binding Rossmann-like Domain"/>
    <property type="match status" value="1"/>
</dbReference>
<dbReference type="HAMAP" id="MF_01576">
    <property type="entry name" value="THF_DHG_CYH"/>
    <property type="match status" value="1"/>
</dbReference>
<dbReference type="InterPro" id="IPR046346">
    <property type="entry name" value="Aminoacid_DH-like_N_sf"/>
</dbReference>
<dbReference type="InterPro" id="IPR036291">
    <property type="entry name" value="NAD(P)-bd_dom_sf"/>
</dbReference>
<dbReference type="InterPro" id="IPR000672">
    <property type="entry name" value="THF_DH/CycHdrlase"/>
</dbReference>
<dbReference type="InterPro" id="IPR020630">
    <property type="entry name" value="THF_DH/CycHdrlase_cat_dom"/>
</dbReference>
<dbReference type="InterPro" id="IPR020631">
    <property type="entry name" value="THF_DH/CycHdrlase_NAD-bd_dom"/>
</dbReference>
<dbReference type="NCBIfam" id="NF010772">
    <property type="entry name" value="PRK14175.1"/>
    <property type="match status" value="1"/>
</dbReference>
<dbReference type="NCBIfam" id="NF010783">
    <property type="entry name" value="PRK14186.1"/>
    <property type="match status" value="1"/>
</dbReference>
<dbReference type="PANTHER" id="PTHR48099:SF5">
    <property type="entry name" value="C-1-TETRAHYDROFOLATE SYNTHASE, CYTOPLASMIC"/>
    <property type="match status" value="1"/>
</dbReference>
<dbReference type="PANTHER" id="PTHR48099">
    <property type="entry name" value="C-1-TETRAHYDROFOLATE SYNTHASE, CYTOPLASMIC-RELATED"/>
    <property type="match status" value="1"/>
</dbReference>
<dbReference type="Pfam" id="PF00763">
    <property type="entry name" value="THF_DHG_CYH"/>
    <property type="match status" value="1"/>
</dbReference>
<dbReference type="Pfam" id="PF02882">
    <property type="entry name" value="THF_DHG_CYH_C"/>
    <property type="match status" value="1"/>
</dbReference>
<dbReference type="PRINTS" id="PR00085">
    <property type="entry name" value="THFDHDRGNASE"/>
</dbReference>
<dbReference type="SUPFAM" id="SSF53223">
    <property type="entry name" value="Aminoacid dehydrogenase-like, N-terminal domain"/>
    <property type="match status" value="1"/>
</dbReference>
<dbReference type="SUPFAM" id="SSF51735">
    <property type="entry name" value="NAD(P)-binding Rossmann-fold domains"/>
    <property type="match status" value="1"/>
</dbReference>